<proteinExistence type="inferred from homology"/>
<accession>Q0TDA9</accession>
<evidence type="ECO:0000255" key="1">
    <source>
        <dbReference type="HAMAP-Rule" id="MF_00143"/>
    </source>
</evidence>
<protein>
    <recommendedName>
        <fullName evidence="1">UPF0114 protein YqhA</fullName>
    </recommendedName>
</protein>
<comment type="subcellular location">
    <subcellularLocation>
        <location evidence="1">Cell membrane</location>
        <topology evidence="1">Multi-pass membrane protein</topology>
    </subcellularLocation>
</comment>
<comment type="similarity">
    <text evidence="1">Belongs to the UPF0114 family.</text>
</comment>
<dbReference type="EMBL" id="CP000247">
    <property type="protein sequence ID" value="ABG71070.1"/>
    <property type="molecule type" value="Genomic_DNA"/>
</dbReference>
<dbReference type="RefSeq" id="WP_000439331.1">
    <property type="nucleotide sequence ID" value="NC_008253.1"/>
</dbReference>
<dbReference type="KEGG" id="ecp:ECP_3087"/>
<dbReference type="HOGENOM" id="CLU_097887_1_1_6"/>
<dbReference type="Proteomes" id="UP000009182">
    <property type="component" value="Chromosome"/>
</dbReference>
<dbReference type="GO" id="GO:0005886">
    <property type="term" value="C:plasma membrane"/>
    <property type="evidence" value="ECO:0007669"/>
    <property type="project" value="UniProtKB-SubCell"/>
</dbReference>
<dbReference type="HAMAP" id="MF_00143">
    <property type="entry name" value="UPF0114"/>
    <property type="match status" value="1"/>
</dbReference>
<dbReference type="InterPro" id="IPR005134">
    <property type="entry name" value="UPF0114"/>
</dbReference>
<dbReference type="InterPro" id="IPR020761">
    <property type="entry name" value="UPF0114_bac"/>
</dbReference>
<dbReference type="NCBIfam" id="TIGR00645">
    <property type="entry name" value="HI0507"/>
    <property type="match status" value="1"/>
</dbReference>
<dbReference type="PANTHER" id="PTHR38596">
    <property type="entry name" value="UPF0114 PROTEIN YQHA"/>
    <property type="match status" value="1"/>
</dbReference>
<dbReference type="PANTHER" id="PTHR38596:SF1">
    <property type="entry name" value="UPF0114 PROTEIN YQHA"/>
    <property type="match status" value="1"/>
</dbReference>
<dbReference type="Pfam" id="PF03350">
    <property type="entry name" value="UPF0114"/>
    <property type="match status" value="1"/>
</dbReference>
<feature type="chain" id="PRO_1000009478" description="UPF0114 protein YqhA">
    <location>
        <begin position="1"/>
        <end position="164"/>
    </location>
</feature>
<feature type="transmembrane region" description="Helical" evidence="1">
    <location>
        <begin position="15"/>
        <end position="35"/>
    </location>
</feature>
<feature type="transmembrane region" description="Helical" evidence="1">
    <location>
        <begin position="53"/>
        <end position="73"/>
    </location>
</feature>
<feature type="transmembrane region" description="Helical" evidence="1">
    <location>
        <begin position="136"/>
        <end position="156"/>
    </location>
</feature>
<sequence>MERFLENAMYASRWLLAPVYFGLSLALVALALKFFQEIIHVLPNIFSMAESDLILVLLSLVDMTLVGGLLVMVMFSGYENFVSQLDISENKEKLNWLGKMDATSLKNKVAASIVAISSIHLLRVFMDAKNVPDNKLMWYVIIHLTFVLSAFVMGYLDRLTRHNH</sequence>
<name>YQHA_ECOL5</name>
<gene>
    <name evidence="1" type="primary">yqhA</name>
    <name type="ordered locus">ECP_3087</name>
</gene>
<keyword id="KW-1003">Cell membrane</keyword>
<keyword id="KW-0472">Membrane</keyword>
<keyword id="KW-0812">Transmembrane</keyword>
<keyword id="KW-1133">Transmembrane helix</keyword>
<organism>
    <name type="scientific">Escherichia coli O6:K15:H31 (strain 536 / UPEC)</name>
    <dbReference type="NCBI Taxonomy" id="362663"/>
    <lineage>
        <taxon>Bacteria</taxon>
        <taxon>Pseudomonadati</taxon>
        <taxon>Pseudomonadota</taxon>
        <taxon>Gammaproteobacteria</taxon>
        <taxon>Enterobacterales</taxon>
        <taxon>Enterobacteriaceae</taxon>
        <taxon>Escherichia</taxon>
    </lineage>
</organism>
<reference key="1">
    <citation type="journal article" date="2006" name="Mol. Microbiol.">
        <title>Role of pathogenicity island-associated integrases in the genome plasticity of uropathogenic Escherichia coli strain 536.</title>
        <authorList>
            <person name="Hochhut B."/>
            <person name="Wilde C."/>
            <person name="Balling G."/>
            <person name="Middendorf B."/>
            <person name="Dobrindt U."/>
            <person name="Brzuszkiewicz E."/>
            <person name="Gottschalk G."/>
            <person name="Carniel E."/>
            <person name="Hacker J."/>
        </authorList>
    </citation>
    <scope>NUCLEOTIDE SEQUENCE [LARGE SCALE GENOMIC DNA]</scope>
    <source>
        <strain>536 / UPEC</strain>
    </source>
</reference>